<protein>
    <recommendedName>
        <fullName evidence="3">Uncharacterized oxidoreductase SpyM50865</fullName>
        <ecNumber evidence="3">1.-.-.-</ecNumber>
    </recommendedName>
    <alternativeName>
        <fullName evidence="2">SpyOYE</fullName>
    </alternativeName>
</protein>
<reference key="1">
    <citation type="journal article" date="2007" name="J. Bacteriol.">
        <title>Complete genome of acute rheumatic fever-associated serotype M5 Streptococcus pyogenes strain Manfredo.</title>
        <authorList>
            <person name="Holden M.T.G."/>
            <person name="Scott A."/>
            <person name="Cherevach I."/>
            <person name="Chillingworth T."/>
            <person name="Churcher C."/>
            <person name="Cronin A."/>
            <person name="Dowd L."/>
            <person name="Feltwell T."/>
            <person name="Hamlin N."/>
            <person name="Holroyd S."/>
            <person name="Jagels K."/>
            <person name="Moule S."/>
            <person name="Mungall K."/>
            <person name="Quail M.A."/>
            <person name="Price C."/>
            <person name="Rabbinowitsch E."/>
            <person name="Sharp S."/>
            <person name="Skelton J."/>
            <person name="Whitehead S."/>
            <person name="Barrell B.G."/>
            <person name="Kehoe M."/>
            <person name="Parkhill J."/>
        </authorList>
    </citation>
    <scope>NUCLEOTIDE SEQUENCE [LARGE SCALE GENOMIC DNA]</scope>
    <source>
        <strain>Manfredo</strain>
    </source>
</reference>
<reference key="2">
    <citation type="journal article" date="2015" name="Mol. Cell">
        <title>Identification of a class of protein ADP-ribosylating sirtuins in microbial pathogens.</title>
        <authorList>
            <person name="Rack J.G."/>
            <person name="Morra R."/>
            <person name="Barkauskaite E."/>
            <person name="Kraehenbuehl R."/>
            <person name="Ariza A."/>
            <person name="Qu Y."/>
            <person name="Ortmayer M."/>
            <person name="Leidecker O."/>
            <person name="Cameron D.R."/>
            <person name="Matic I."/>
            <person name="Peleg A.Y."/>
            <person name="Leys D."/>
            <person name="Traven A."/>
            <person name="Ahel I."/>
        </authorList>
    </citation>
    <scope>INTERACTION WITH GCVH-L</scope>
    <source>
        <strain>Manfredo</strain>
    </source>
</reference>
<name>OYE_STRPG</name>
<proteinExistence type="evidence at protein level"/>
<gene>
    <name evidence="4" type="ordered locus">SpyM50865</name>
</gene>
<dbReference type="EC" id="1.-.-.-" evidence="3"/>
<dbReference type="EMBL" id="AM295007">
    <property type="protein sequence ID" value="CAM30193.1"/>
    <property type="molecule type" value="Genomic_DNA"/>
</dbReference>
<dbReference type="RefSeq" id="WP_002984549.1">
    <property type="nucleotide sequence ID" value="NC_009332.1"/>
</dbReference>
<dbReference type="SMR" id="P0DN73"/>
<dbReference type="KEGG" id="spf:SpyM50865"/>
<dbReference type="HOGENOM" id="CLU_012153_2_3_9"/>
<dbReference type="GO" id="GO:0010181">
    <property type="term" value="F:FMN binding"/>
    <property type="evidence" value="ECO:0007669"/>
    <property type="project" value="InterPro"/>
</dbReference>
<dbReference type="GO" id="GO:0016491">
    <property type="term" value="F:oxidoreductase activity"/>
    <property type="evidence" value="ECO:0007669"/>
    <property type="project" value="UniProtKB-KW"/>
</dbReference>
<dbReference type="CDD" id="cd04735">
    <property type="entry name" value="OYE_like_4_FMN"/>
    <property type="match status" value="1"/>
</dbReference>
<dbReference type="Gene3D" id="3.20.20.70">
    <property type="entry name" value="Aldolase class I"/>
    <property type="match status" value="1"/>
</dbReference>
<dbReference type="InterPro" id="IPR013785">
    <property type="entry name" value="Aldolase_TIM"/>
</dbReference>
<dbReference type="InterPro" id="IPR051799">
    <property type="entry name" value="NADH_flavin_oxidoreductase"/>
</dbReference>
<dbReference type="InterPro" id="IPR001155">
    <property type="entry name" value="OxRdtase_FMN_N"/>
</dbReference>
<dbReference type="PANTHER" id="PTHR43656">
    <property type="entry name" value="BINDING OXIDOREDUCTASE, PUTATIVE (AFU_ORTHOLOGUE AFUA_2G08260)-RELATED"/>
    <property type="match status" value="1"/>
</dbReference>
<dbReference type="PANTHER" id="PTHR43656:SF2">
    <property type="entry name" value="BINDING OXIDOREDUCTASE, PUTATIVE (AFU_ORTHOLOGUE AFUA_2G08260)-RELATED"/>
    <property type="match status" value="1"/>
</dbReference>
<dbReference type="Pfam" id="PF00724">
    <property type="entry name" value="Oxidored_FMN"/>
    <property type="match status" value="1"/>
</dbReference>
<dbReference type="SUPFAM" id="SSF51395">
    <property type="entry name" value="FMN-linked oxidoreductases"/>
    <property type="match status" value="1"/>
</dbReference>
<keyword id="KW-0274">FAD</keyword>
<keyword id="KW-0285">Flavoprotein</keyword>
<keyword id="KW-0520">NAD</keyword>
<keyword id="KW-0560">Oxidoreductase</keyword>
<evidence type="ECO:0000269" key="1">
    <source>
    </source>
</evidence>
<evidence type="ECO:0000303" key="2">
    <source>
    </source>
</evidence>
<evidence type="ECO:0000305" key="3"/>
<evidence type="ECO:0000312" key="4">
    <source>
        <dbReference type="EMBL" id="CAM30193.1"/>
    </source>
</evidence>
<organism>
    <name type="scientific">Streptococcus pyogenes serotype M5 (strain Manfredo)</name>
    <dbReference type="NCBI Taxonomy" id="160491"/>
    <lineage>
        <taxon>Bacteria</taxon>
        <taxon>Bacillati</taxon>
        <taxon>Bacillota</taxon>
        <taxon>Bacilli</taxon>
        <taxon>Lactobacillales</taxon>
        <taxon>Streptococcaceae</taxon>
        <taxon>Streptococcus</taxon>
    </lineage>
</organism>
<comment type="subunit">
    <text evidence="1">Directly interacts with lipoylated GcvH-L (SpyM50867).</text>
</comment>
<comment type="similarity">
    <text evidence="3">Belongs to the NADH:flavin oxidoreductase/NADH oxidase family.</text>
</comment>
<feature type="chain" id="PRO_0000435349" description="Uncharacterized oxidoreductase SpyM50865">
    <location>
        <begin position="1"/>
        <end position="399"/>
    </location>
</feature>
<accession>P0DN73</accession>
<sequence length="399" mass="44510">MKERFSPLFEPLTLPNGSQLDNRFVLSPMVTNSSTKDGYVTQDDVSYALRRAASAPLQITGAAYVDPYGQLFEYGFSVTKDADISGLKELAQAMKAKGAKAVLQLTHAGRFASHALTKYGFVYGPSYMQLRSPQPHEVKPLTGQQIEELIAAYAQATRRAIQAGFDGVEVSSAQRLLIQTFFSTFSNKRTDSYGCQTLFNRSKLTLAVLQAVQQVINQEAPDGFIFGFRATPEETRGNDIGYSIDEFLQLMDWVLNIAKLDYLAIASWGRHVFRNTVRSPGPYYGRRVNQVVRDYLRNKLPVMATGGMNTPDKAIEALAHADFIGVSTPFVVDPEFAHKIKEGCEESIHLRIRPADLKSLAIPQASFKDIVPLMDYGESLPKESRTLFRSLTHNYKEIK</sequence>